<gene>
    <name evidence="1" type="primary">diaA</name>
    <name type="ordered locus">YpAngola_A1122</name>
</gene>
<proteinExistence type="inferred from homology"/>
<protein>
    <recommendedName>
        <fullName evidence="1">DnaA initiator-associating protein DiaA</fullName>
    </recommendedName>
</protein>
<organism>
    <name type="scientific">Yersinia pestis bv. Antiqua (strain Angola)</name>
    <dbReference type="NCBI Taxonomy" id="349746"/>
    <lineage>
        <taxon>Bacteria</taxon>
        <taxon>Pseudomonadati</taxon>
        <taxon>Pseudomonadota</taxon>
        <taxon>Gammaproteobacteria</taxon>
        <taxon>Enterobacterales</taxon>
        <taxon>Yersiniaceae</taxon>
        <taxon>Yersinia</taxon>
    </lineage>
</organism>
<reference key="1">
    <citation type="journal article" date="2010" name="J. Bacteriol.">
        <title>Genome sequence of the deep-rooted Yersinia pestis strain Angola reveals new insights into the evolution and pangenome of the plague bacterium.</title>
        <authorList>
            <person name="Eppinger M."/>
            <person name="Worsham P.L."/>
            <person name="Nikolich M.P."/>
            <person name="Riley D.R."/>
            <person name="Sebastian Y."/>
            <person name="Mou S."/>
            <person name="Achtman M."/>
            <person name="Lindler L.E."/>
            <person name="Ravel J."/>
        </authorList>
    </citation>
    <scope>NUCLEOTIDE SEQUENCE [LARGE SCALE GENOMIC DNA]</scope>
    <source>
        <strain>Angola</strain>
    </source>
</reference>
<evidence type="ECO:0000255" key="1">
    <source>
        <dbReference type="HAMAP-Rule" id="MF_01157"/>
    </source>
</evidence>
<keyword id="KW-0235">DNA replication</keyword>
<feature type="chain" id="PRO_1000137805" description="DnaA initiator-associating protein DiaA">
    <location>
        <begin position="1"/>
        <end position="196"/>
    </location>
</feature>
<feature type="domain" description="SIS" evidence="1">
    <location>
        <begin position="34"/>
        <end position="196"/>
    </location>
</feature>
<comment type="function">
    <text evidence="1">Required for the timely initiation of chromosomal replication via direct interactions with the DnaA initiator protein.</text>
</comment>
<comment type="subunit">
    <text evidence="1">Homotetramer; dimer of dimers.</text>
</comment>
<comment type="similarity">
    <text evidence="1">Belongs to the SIS family. DiaA subfamily.</text>
</comment>
<dbReference type="EMBL" id="CP000901">
    <property type="protein sequence ID" value="ABX85659.1"/>
    <property type="molecule type" value="Genomic_DNA"/>
</dbReference>
<dbReference type="RefSeq" id="WP_002210146.1">
    <property type="nucleotide sequence ID" value="NZ_CP009935.1"/>
</dbReference>
<dbReference type="SMR" id="A9R1Q8"/>
<dbReference type="GeneID" id="57975165"/>
<dbReference type="KEGG" id="ypg:YpAngola_A1122"/>
<dbReference type="PATRIC" id="fig|349746.12.peg.2073"/>
<dbReference type="GO" id="GO:0097367">
    <property type="term" value="F:carbohydrate derivative binding"/>
    <property type="evidence" value="ECO:0007669"/>
    <property type="project" value="InterPro"/>
</dbReference>
<dbReference type="GO" id="GO:1901135">
    <property type="term" value="P:carbohydrate derivative metabolic process"/>
    <property type="evidence" value="ECO:0007669"/>
    <property type="project" value="InterPro"/>
</dbReference>
<dbReference type="GO" id="GO:0006260">
    <property type="term" value="P:DNA replication"/>
    <property type="evidence" value="ECO:0007669"/>
    <property type="project" value="UniProtKB-UniRule"/>
</dbReference>
<dbReference type="CDD" id="cd05006">
    <property type="entry name" value="SIS_GmhA"/>
    <property type="match status" value="1"/>
</dbReference>
<dbReference type="FunFam" id="3.40.50.10490:FF:000006">
    <property type="entry name" value="DnaA initiator-associating protein DiaA"/>
    <property type="match status" value="1"/>
</dbReference>
<dbReference type="Gene3D" id="3.40.50.10490">
    <property type="entry name" value="Glucose-6-phosphate isomerase like protein, domain 1"/>
    <property type="match status" value="1"/>
</dbReference>
<dbReference type="HAMAP" id="MF_01157">
    <property type="entry name" value="SIS_DiaA"/>
    <property type="match status" value="1"/>
</dbReference>
<dbReference type="InterPro" id="IPR023070">
    <property type="entry name" value="DiaA"/>
</dbReference>
<dbReference type="InterPro" id="IPR035461">
    <property type="entry name" value="GmhA/DiaA"/>
</dbReference>
<dbReference type="InterPro" id="IPR001347">
    <property type="entry name" value="SIS_dom"/>
</dbReference>
<dbReference type="InterPro" id="IPR046348">
    <property type="entry name" value="SIS_dom_sf"/>
</dbReference>
<dbReference type="InterPro" id="IPR050099">
    <property type="entry name" value="SIS_GmhA/DiaA_subfam"/>
</dbReference>
<dbReference type="NCBIfam" id="NF008138">
    <property type="entry name" value="PRK10886.1"/>
    <property type="match status" value="1"/>
</dbReference>
<dbReference type="PANTHER" id="PTHR30390:SF6">
    <property type="entry name" value="DNAA INITIATOR-ASSOCIATING PROTEIN DIAA"/>
    <property type="match status" value="1"/>
</dbReference>
<dbReference type="PANTHER" id="PTHR30390">
    <property type="entry name" value="SEDOHEPTULOSE 7-PHOSPHATE ISOMERASE / DNAA INITIATOR-ASSOCIATING FACTOR FOR REPLICATION INITIATION"/>
    <property type="match status" value="1"/>
</dbReference>
<dbReference type="Pfam" id="PF13580">
    <property type="entry name" value="SIS_2"/>
    <property type="match status" value="1"/>
</dbReference>
<dbReference type="SUPFAM" id="SSF53697">
    <property type="entry name" value="SIS domain"/>
    <property type="match status" value="1"/>
</dbReference>
<dbReference type="PROSITE" id="PS51464">
    <property type="entry name" value="SIS"/>
    <property type="match status" value="1"/>
</dbReference>
<accession>A9R1Q8</accession>
<sequence length="196" mass="20938">MLERIKGCFTESIQTQIAAAEALPDAISCAAMALVQSLLNGNKILCCGNGTSAANAQHFAASMINRFETERPSLPAIALNADNVVLTAITNDRLHDEVYAKQVRALGQAGDVLLAISTRGNSRDIVKAVEAAVTRDMTIVALTGYDGGELAGLLGQLDVEIRIPSHRGARVQELHMLTVNCLCDLIDNTLFPHQND</sequence>
<name>DIAA_YERPG</name>